<sequence length="548" mass="61629">MVYTSTYRHTIVVDLLEYLGIVSNLETLQSAREDETRKPENTDKKECKPDYDIECGPNRSCSESSTDSDSSGSQIEKNDPFRVDWNGPSDPENPQNWPLLKKSLVVFQIMLLTCVTYMGSSIYTPGQEYIQEEFHVGHVVATLNLSLYVLGYGLGPIIFSPLSETARYGRLNLYMVTLFFFMIFQVGCATVHNIGGLIVMRFISGILCSPSLATGGGTVADIISPEMVPLVLGMWSAGAVAAPVLAPLLGAAMVDAKNWRFIFWLLMWLSAATFILLAFFFPETQHHNILYRRALKLRKETGDDRYYTEQDKLDREVDARTFLINTLYRPLKMIIKEPAILAFDLYIAVAYGCFYLFFEAFPIVFVGIYHFSLVEVGLAYMGFCVGCVLAYGLFGILNMRIIVPRFRNGTFTPEAFLIVAMCVCWCLPLSLFLFGWTARVHWILPVISEVFFVLAVFNIFQATFAYLATCYPKYVASVFAGNGFCRASFACAFPLFGRAMYDNLATKNYPVAWGSSLVGFLTLGLAIIPFILYKYGPSLRTRSSYTEE</sequence>
<protein>
    <recommendedName>
        <fullName>Fluconazole resistance protein 1</fullName>
    </recommendedName>
</protein>
<proteinExistence type="evidence at protein level"/>
<gene>
    <name type="primary">FLR1</name>
    <name type="ordered locus">YBR008C</name>
    <name type="ORF">YBR0120</name>
</gene>
<keyword id="KW-0472">Membrane</keyword>
<keyword id="KW-1185">Reference proteome</keyword>
<keyword id="KW-0812">Transmembrane</keyword>
<keyword id="KW-1133">Transmembrane helix</keyword>
<keyword id="KW-0813">Transport</keyword>
<dbReference type="EMBL" id="Z35877">
    <property type="protein sequence ID" value="CAA84946.1"/>
    <property type="molecule type" value="Genomic_DNA"/>
</dbReference>
<dbReference type="EMBL" id="BK006936">
    <property type="protein sequence ID" value="DAA07129.1"/>
    <property type="molecule type" value="Genomic_DNA"/>
</dbReference>
<dbReference type="PIR" id="S45860">
    <property type="entry name" value="S45860"/>
</dbReference>
<dbReference type="RefSeq" id="NP_009562.1">
    <property type="nucleotide sequence ID" value="NM_001178356.1"/>
</dbReference>
<dbReference type="SMR" id="P38124"/>
<dbReference type="BioGRID" id="32709">
    <property type="interactions" value="27"/>
</dbReference>
<dbReference type="DIP" id="DIP-4503N"/>
<dbReference type="FunCoup" id="P38124">
    <property type="interactions" value="31"/>
</dbReference>
<dbReference type="STRING" id="4932.YBR008C"/>
<dbReference type="TCDB" id="2.A.1.2.17">
    <property type="family name" value="the major facilitator superfamily (mfs)"/>
</dbReference>
<dbReference type="iPTMnet" id="P38124"/>
<dbReference type="PaxDb" id="4932-YBR008C"/>
<dbReference type="PeptideAtlas" id="P38124"/>
<dbReference type="EnsemblFungi" id="YBR008C_mRNA">
    <property type="protein sequence ID" value="YBR008C"/>
    <property type="gene ID" value="YBR008C"/>
</dbReference>
<dbReference type="GeneID" id="852293"/>
<dbReference type="KEGG" id="sce:YBR008C"/>
<dbReference type="AGR" id="SGD:S000000212"/>
<dbReference type="SGD" id="S000000212">
    <property type="gene designation" value="FLR1"/>
</dbReference>
<dbReference type="VEuPathDB" id="FungiDB:YBR008C"/>
<dbReference type="eggNOG" id="KOG0255">
    <property type="taxonomic scope" value="Eukaryota"/>
</dbReference>
<dbReference type="HOGENOM" id="CLU_008455_11_1_1"/>
<dbReference type="InParanoid" id="P38124"/>
<dbReference type="OMA" id="AYLATCY"/>
<dbReference type="OrthoDB" id="3357846at2759"/>
<dbReference type="BioCyc" id="YEAST:G3O-28995-MONOMER"/>
<dbReference type="BioGRID-ORCS" id="852293">
    <property type="hits" value="0 hits in 10 CRISPR screens"/>
</dbReference>
<dbReference type="PRO" id="PR:P38124"/>
<dbReference type="Proteomes" id="UP000002311">
    <property type="component" value="Chromosome II"/>
</dbReference>
<dbReference type="RNAct" id="P38124">
    <property type="molecule type" value="protein"/>
</dbReference>
<dbReference type="GO" id="GO:0071944">
    <property type="term" value="C:cell periphery"/>
    <property type="evidence" value="ECO:0007005"/>
    <property type="project" value="SGD"/>
</dbReference>
<dbReference type="GO" id="GO:0005737">
    <property type="term" value="C:cytoplasm"/>
    <property type="evidence" value="ECO:0007005"/>
    <property type="project" value="SGD"/>
</dbReference>
<dbReference type="GO" id="GO:0005634">
    <property type="term" value="C:nucleus"/>
    <property type="evidence" value="ECO:0007005"/>
    <property type="project" value="SGD"/>
</dbReference>
<dbReference type="GO" id="GO:0005886">
    <property type="term" value="C:plasma membrane"/>
    <property type="evidence" value="ECO:0000314"/>
    <property type="project" value="SGD"/>
</dbReference>
<dbReference type="GO" id="GO:0015244">
    <property type="term" value="F:fluconazole transmembrane transporter activity"/>
    <property type="evidence" value="ECO:0000315"/>
    <property type="project" value="SGD"/>
</dbReference>
<dbReference type="GO" id="GO:0042910">
    <property type="term" value="F:xenobiotic transmembrane transporter activity"/>
    <property type="evidence" value="ECO:0007669"/>
    <property type="project" value="InterPro"/>
</dbReference>
<dbReference type="GO" id="GO:1990961">
    <property type="term" value="P:xenobiotic detoxification by transmembrane export across the plasma membrane"/>
    <property type="evidence" value="ECO:0000315"/>
    <property type="project" value="SGD"/>
</dbReference>
<dbReference type="CDD" id="cd17323">
    <property type="entry name" value="MFS_Tpo1_MDR_like"/>
    <property type="match status" value="1"/>
</dbReference>
<dbReference type="FunFam" id="1.20.1250.20:FF:000011">
    <property type="entry name" value="MFS multidrug transporter, putative"/>
    <property type="match status" value="1"/>
</dbReference>
<dbReference type="Gene3D" id="1.20.1250.20">
    <property type="entry name" value="MFS general substrate transporter like domains"/>
    <property type="match status" value="1"/>
</dbReference>
<dbReference type="InterPro" id="IPR011701">
    <property type="entry name" value="MFS"/>
</dbReference>
<dbReference type="InterPro" id="IPR020846">
    <property type="entry name" value="MFS_dom"/>
</dbReference>
<dbReference type="InterPro" id="IPR036259">
    <property type="entry name" value="MFS_trans_sf"/>
</dbReference>
<dbReference type="InterPro" id="IPR004734">
    <property type="entry name" value="Multidrug-R"/>
</dbReference>
<dbReference type="NCBIfam" id="TIGR00880">
    <property type="entry name" value="2_A_01_02"/>
    <property type="match status" value="1"/>
</dbReference>
<dbReference type="PANTHER" id="PTHR23502:SF23">
    <property type="entry name" value="FLUCONAZOLE RESISTANCE PROTEIN 1"/>
    <property type="match status" value="1"/>
</dbReference>
<dbReference type="PANTHER" id="PTHR23502">
    <property type="entry name" value="MAJOR FACILITATOR SUPERFAMILY"/>
    <property type="match status" value="1"/>
</dbReference>
<dbReference type="Pfam" id="PF07690">
    <property type="entry name" value="MFS_1"/>
    <property type="match status" value="1"/>
</dbReference>
<dbReference type="SUPFAM" id="SSF103473">
    <property type="entry name" value="MFS general substrate transporter"/>
    <property type="match status" value="1"/>
</dbReference>
<dbReference type="PROSITE" id="PS50850">
    <property type="entry name" value="MFS"/>
    <property type="match status" value="1"/>
</dbReference>
<reference key="1">
    <citation type="journal article" date="1994" name="EMBO J.">
        <title>Complete DNA sequence of yeast chromosome II.</title>
        <authorList>
            <person name="Feldmann H."/>
            <person name="Aigle M."/>
            <person name="Aljinovic G."/>
            <person name="Andre B."/>
            <person name="Baclet M.C."/>
            <person name="Barthe C."/>
            <person name="Baur A."/>
            <person name="Becam A.-M."/>
            <person name="Biteau N."/>
            <person name="Boles E."/>
            <person name="Brandt T."/>
            <person name="Brendel M."/>
            <person name="Brueckner M."/>
            <person name="Bussereau F."/>
            <person name="Christiansen C."/>
            <person name="Contreras R."/>
            <person name="Crouzet M."/>
            <person name="Cziepluch C."/>
            <person name="Demolis N."/>
            <person name="Delaveau T."/>
            <person name="Doignon F."/>
            <person name="Domdey H."/>
            <person name="Duesterhus S."/>
            <person name="Dubois E."/>
            <person name="Dujon B."/>
            <person name="El Bakkoury M."/>
            <person name="Entian K.-D."/>
            <person name="Feuermann M."/>
            <person name="Fiers W."/>
            <person name="Fobo G.M."/>
            <person name="Fritz C."/>
            <person name="Gassenhuber J."/>
            <person name="Glansdorff N."/>
            <person name="Goffeau A."/>
            <person name="Grivell L.A."/>
            <person name="de Haan M."/>
            <person name="Hein C."/>
            <person name="Herbert C.J."/>
            <person name="Hollenberg C.P."/>
            <person name="Holmstroem K."/>
            <person name="Jacq C."/>
            <person name="Jacquet M."/>
            <person name="Jauniaux J.-C."/>
            <person name="Jonniaux J.-L."/>
            <person name="Kallesoee T."/>
            <person name="Kiesau P."/>
            <person name="Kirchrath L."/>
            <person name="Koetter P."/>
            <person name="Korol S."/>
            <person name="Liebl S."/>
            <person name="Logghe M."/>
            <person name="Lohan A.J.E."/>
            <person name="Louis E.J."/>
            <person name="Li Z.Y."/>
            <person name="Maat M.J."/>
            <person name="Mallet L."/>
            <person name="Mannhaupt G."/>
            <person name="Messenguy F."/>
            <person name="Miosga T."/>
            <person name="Molemans F."/>
            <person name="Mueller S."/>
            <person name="Nasr F."/>
            <person name="Obermaier B."/>
            <person name="Perea J."/>
            <person name="Pierard A."/>
            <person name="Piravandi E."/>
            <person name="Pohl F.M."/>
            <person name="Pohl T.M."/>
            <person name="Potier S."/>
            <person name="Proft M."/>
            <person name="Purnelle B."/>
            <person name="Ramezani Rad M."/>
            <person name="Rieger M."/>
            <person name="Rose M."/>
            <person name="Schaaff-Gerstenschlaeger I."/>
            <person name="Scherens B."/>
            <person name="Schwarzlose C."/>
            <person name="Skala J."/>
            <person name="Slonimski P.P."/>
            <person name="Smits P.H.M."/>
            <person name="Souciet J.-L."/>
            <person name="Steensma H.Y."/>
            <person name="Stucka R."/>
            <person name="Urrestarazu L.A."/>
            <person name="van der Aart Q.J.M."/>
            <person name="Van Dyck L."/>
            <person name="Vassarotti A."/>
            <person name="Vetter I."/>
            <person name="Vierendeels F."/>
            <person name="Vissers S."/>
            <person name="Wagner G."/>
            <person name="de Wergifosse P."/>
            <person name="Wolfe K.H."/>
            <person name="Zagulski M."/>
            <person name="Zimmermann F.K."/>
            <person name="Mewes H.-W."/>
            <person name="Kleine K."/>
        </authorList>
    </citation>
    <scope>NUCLEOTIDE SEQUENCE [LARGE SCALE GENOMIC DNA]</scope>
    <source>
        <strain>ATCC 204508 / S288c</strain>
    </source>
</reference>
<reference key="2">
    <citation type="journal article" date="2014" name="G3 (Bethesda)">
        <title>The reference genome sequence of Saccharomyces cerevisiae: Then and now.</title>
        <authorList>
            <person name="Engel S.R."/>
            <person name="Dietrich F.S."/>
            <person name="Fisk D.G."/>
            <person name="Binkley G."/>
            <person name="Balakrishnan R."/>
            <person name="Costanzo M.C."/>
            <person name="Dwight S.S."/>
            <person name="Hitz B.C."/>
            <person name="Karra K."/>
            <person name="Nash R.S."/>
            <person name="Weng S."/>
            <person name="Wong E.D."/>
            <person name="Lloyd P."/>
            <person name="Skrzypek M.S."/>
            <person name="Miyasato S.R."/>
            <person name="Simison M."/>
            <person name="Cherry J.M."/>
        </authorList>
    </citation>
    <scope>GENOME REANNOTATION</scope>
    <source>
        <strain>ATCC 204508 / S288c</strain>
    </source>
</reference>
<reference key="3">
    <citation type="journal article" date="1997" name="J. Biol. Chem.">
        <title>AP1-mediated multidrug resistance in Saccharomyces cerevisiae requires FLR1 encoding a transporter of the major facilitator superfamily.</title>
        <authorList>
            <person name="Alarco A.-M."/>
            <person name="Balan I."/>
            <person name="Talibi D."/>
            <person name="Mainville N."/>
            <person name="Raymond M."/>
        </authorList>
    </citation>
    <scope>CHARACTERIZATION</scope>
</reference>
<name>FLR1_YEAST</name>
<organism>
    <name type="scientific">Saccharomyces cerevisiae (strain ATCC 204508 / S288c)</name>
    <name type="common">Baker's yeast</name>
    <dbReference type="NCBI Taxonomy" id="559292"/>
    <lineage>
        <taxon>Eukaryota</taxon>
        <taxon>Fungi</taxon>
        <taxon>Dikarya</taxon>
        <taxon>Ascomycota</taxon>
        <taxon>Saccharomycotina</taxon>
        <taxon>Saccharomycetes</taxon>
        <taxon>Saccharomycetales</taxon>
        <taxon>Saccharomycetaceae</taxon>
        <taxon>Saccharomyces</taxon>
    </lineage>
</organism>
<evidence type="ECO:0000255" key="1"/>
<evidence type="ECO:0000256" key="2">
    <source>
        <dbReference type="SAM" id="MobiDB-lite"/>
    </source>
</evidence>
<evidence type="ECO:0000305" key="3"/>
<comment type="function">
    <text>Probable efflux transporter. Confers resistance to the azole derivative fluconazole (FCZ).</text>
</comment>
<comment type="subcellular location">
    <subcellularLocation>
        <location evidence="3">Membrane</location>
        <topology evidence="3">Multi-pass membrane protein</topology>
    </subcellularLocation>
</comment>
<comment type="similarity">
    <text evidence="3">Belongs to the major facilitator superfamily.</text>
</comment>
<accession>P38124</accession>
<accession>D6VQ09</accession>
<feature type="chain" id="PRO_0000173435" description="Fluconazole resistance protein 1">
    <location>
        <begin position="1"/>
        <end position="548"/>
    </location>
</feature>
<feature type="transmembrane region" description="Helical" evidence="1">
    <location>
        <begin position="104"/>
        <end position="124"/>
    </location>
</feature>
<feature type="transmembrane region" description="Helical" evidence="1">
    <location>
        <begin position="139"/>
        <end position="159"/>
    </location>
</feature>
<feature type="transmembrane region" description="Helical" evidence="1">
    <location>
        <begin position="179"/>
        <end position="199"/>
    </location>
</feature>
<feature type="transmembrane region" description="Helical" evidence="1">
    <location>
        <begin position="203"/>
        <end position="223"/>
    </location>
</feature>
<feature type="transmembrane region" description="Helical" evidence="1">
    <location>
        <begin position="230"/>
        <end position="250"/>
    </location>
</feature>
<feature type="transmembrane region" description="Helical" evidence="1">
    <location>
        <begin position="261"/>
        <end position="281"/>
    </location>
</feature>
<feature type="transmembrane region" description="Helical" evidence="1">
    <location>
        <begin position="347"/>
        <end position="367"/>
    </location>
</feature>
<feature type="transmembrane region" description="Helical" evidence="1">
    <location>
        <begin position="376"/>
        <end position="396"/>
    </location>
</feature>
<feature type="transmembrane region" description="Helical" evidence="1">
    <location>
        <begin position="416"/>
        <end position="436"/>
    </location>
</feature>
<feature type="transmembrane region" description="Helical" evidence="1">
    <location>
        <begin position="440"/>
        <end position="460"/>
    </location>
</feature>
<feature type="transmembrane region" description="Helical" evidence="1">
    <location>
        <begin position="476"/>
        <end position="496"/>
    </location>
</feature>
<feature type="transmembrane region" description="Helical" evidence="1">
    <location>
        <begin position="511"/>
        <end position="531"/>
    </location>
</feature>
<feature type="region of interest" description="Disordered" evidence="2">
    <location>
        <begin position="30"/>
        <end position="94"/>
    </location>
</feature>
<feature type="compositionally biased region" description="Basic and acidic residues" evidence="2">
    <location>
        <begin position="31"/>
        <end position="51"/>
    </location>
</feature>
<feature type="compositionally biased region" description="Low complexity" evidence="2">
    <location>
        <begin position="60"/>
        <end position="73"/>
    </location>
</feature>